<dbReference type="EC" id="6.3.5.7" evidence="1"/>
<dbReference type="EMBL" id="CP000025">
    <property type="protein sequence ID" value="AAW35527.1"/>
    <property type="molecule type" value="Genomic_DNA"/>
</dbReference>
<dbReference type="RefSeq" id="WP_011049878.1">
    <property type="nucleotide sequence ID" value="NC_003912.7"/>
</dbReference>
<dbReference type="SMR" id="Q5HU43"/>
<dbReference type="KEGG" id="cjr:CJE1202"/>
<dbReference type="HOGENOM" id="CLU_009600_0_3_7"/>
<dbReference type="GO" id="GO:0030956">
    <property type="term" value="C:glutamyl-tRNA(Gln) amidotransferase complex"/>
    <property type="evidence" value="ECO:0007669"/>
    <property type="project" value="InterPro"/>
</dbReference>
<dbReference type="GO" id="GO:0005524">
    <property type="term" value="F:ATP binding"/>
    <property type="evidence" value="ECO:0007669"/>
    <property type="project" value="UniProtKB-KW"/>
</dbReference>
<dbReference type="GO" id="GO:0050567">
    <property type="term" value="F:glutaminyl-tRNA synthase (glutamine-hydrolyzing) activity"/>
    <property type="evidence" value="ECO:0007669"/>
    <property type="project" value="UniProtKB-UniRule"/>
</dbReference>
<dbReference type="GO" id="GO:0006412">
    <property type="term" value="P:translation"/>
    <property type="evidence" value="ECO:0007669"/>
    <property type="project" value="UniProtKB-UniRule"/>
</dbReference>
<dbReference type="Gene3D" id="3.90.1300.10">
    <property type="entry name" value="Amidase signature (AS) domain"/>
    <property type="match status" value="1"/>
</dbReference>
<dbReference type="HAMAP" id="MF_00120">
    <property type="entry name" value="GatA"/>
    <property type="match status" value="1"/>
</dbReference>
<dbReference type="InterPro" id="IPR000120">
    <property type="entry name" value="Amidase"/>
</dbReference>
<dbReference type="InterPro" id="IPR020556">
    <property type="entry name" value="Amidase_CS"/>
</dbReference>
<dbReference type="InterPro" id="IPR023631">
    <property type="entry name" value="Amidase_dom"/>
</dbReference>
<dbReference type="InterPro" id="IPR036928">
    <property type="entry name" value="AS_sf"/>
</dbReference>
<dbReference type="InterPro" id="IPR004412">
    <property type="entry name" value="GatA"/>
</dbReference>
<dbReference type="NCBIfam" id="TIGR00132">
    <property type="entry name" value="gatA"/>
    <property type="match status" value="1"/>
</dbReference>
<dbReference type="PANTHER" id="PTHR11895:SF151">
    <property type="entry name" value="GLUTAMYL-TRNA(GLN) AMIDOTRANSFERASE SUBUNIT A"/>
    <property type="match status" value="1"/>
</dbReference>
<dbReference type="PANTHER" id="PTHR11895">
    <property type="entry name" value="TRANSAMIDASE"/>
    <property type="match status" value="1"/>
</dbReference>
<dbReference type="Pfam" id="PF01425">
    <property type="entry name" value="Amidase"/>
    <property type="match status" value="1"/>
</dbReference>
<dbReference type="SUPFAM" id="SSF75304">
    <property type="entry name" value="Amidase signature (AS) enzymes"/>
    <property type="match status" value="1"/>
</dbReference>
<dbReference type="PROSITE" id="PS00571">
    <property type="entry name" value="AMIDASES"/>
    <property type="match status" value="1"/>
</dbReference>
<proteinExistence type="inferred from homology"/>
<evidence type="ECO:0000255" key="1">
    <source>
        <dbReference type="HAMAP-Rule" id="MF_00120"/>
    </source>
</evidence>
<keyword id="KW-0067">ATP-binding</keyword>
<keyword id="KW-0436">Ligase</keyword>
<keyword id="KW-0547">Nucleotide-binding</keyword>
<keyword id="KW-0648">Protein biosynthesis</keyword>
<organism>
    <name type="scientific">Campylobacter jejuni (strain RM1221)</name>
    <dbReference type="NCBI Taxonomy" id="195099"/>
    <lineage>
        <taxon>Bacteria</taxon>
        <taxon>Pseudomonadati</taxon>
        <taxon>Campylobacterota</taxon>
        <taxon>Epsilonproteobacteria</taxon>
        <taxon>Campylobacterales</taxon>
        <taxon>Campylobacteraceae</taxon>
        <taxon>Campylobacter</taxon>
    </lineage>
</organism>
<reference key="1">
    <citation type="journal article" date="2005" name="PLoS Biol.">
        <title>Major structural differences and novel potential virulence mechanisms from the genomes of multiple Campylobacter species.</title>
        <authorList>
            <person name="Fouts D.E."/>
            <person name="Mongodin E.F."/>
            <person name="Mandrell R.E."/>
            <person name="Miller W.G."/>
            <person name="Rasko D.A."/>
            <person name="Ravel J."/>
            <person name="Brinkac L.M."/>
            <person name="DeBoy R.T."/>
            <person name="Parker C.T."/>
            <person name="Daugherty S.C."/>
            <person name="Dodson R.J."/>
            <person name="Durkin A.S."/>
            <person name="Madupu R."/>
            <person name="Sullivan S.A."/>
            <person name="Shetty J.U."/>
            <person name="Ayodeji M.A."/>
            <person name="Shvartsbeyn A."/>
            <person name="Schatz M.C."/>
            <person name="Badger J.H."/>
            <person name="Fraser C.M."/>
            <person name="Nelson K.E."/>
        </authorList>
    </citation>
    <scope>NUCLEOTIDE SEQUENCE [LARGE SCALE GENOMIC DNA]</scope>
    <source>
        <strain>RM1221</strain>
    </source>
</reference>
<feature type="chain" id="PRO_0000105148" description="Glutamyl-tRNA(Gln) amidotransferase subunit A">
    <location>
        <begin position="1"/>
        <end position="453"/>
    </location>
</feature>
<feature type="active site" description="Charge relay system" evidence="1">
    <location>
        <position position="56"/>
    </location>
</feature>
<feature type="active site" description="Charge relay system" evidence="1">
    <location>
        <position position="131"/>
    </location>
</feature>
<feature type="active site" description="Acyl-ester intermediate" evidence="1">
    <location>
        <position position="155"/>
    </location>
</feature>
<gene>
    <name evidence="1" type="primary">gatA</name>
    <name type="ordered locus">CJE1202</name>
</gene>
<sequence length="453" mass="49356">MITLKEALKYSKEELENLKKELNEKAKKEKKIGAYIEQFLDKDLSVSGEGVPVAIKDNISVKGWELTSASKILQGYIAPYDASVIVNLKANGFSPFGRCNMDEFAMGSSTASSYYGKTLNPLNFERVPGGSSGGSAAAVAGGLALASLGSDTGGSVRQPAAFCGCVGFKPSYGRVSRYGLASYSSSLDQIGVLTQNVEDAAILYDAIAGYDKMDSTSANIEFIKTAPNLNANKKLKIAVIENYVNDADSEVKNALLKTIDMLKANGHEIVYKNLLDSKFDIAAYYIIATAEASTNLSRYDGVRYGKRSENIQNLKEMYVNTRSEGFGEEVKRRILLGTFVLSSGYYDAYYIKAQKARAFIKAKYEEILQDCDLIFMPVTPTTAFKFDTQKSPIQTYLEDVYTISVNLAGLGGISVPVAKDKEGLNISAQLICKAYDEQTLLDGALSLEQMIKN</sequence>
<name>GATA_CAMJR</name>
<protein>
    <recommendedName>
        <fullName evidence="1">Glutamyl-tRNA(Gln) amidotransferase subunit A</fullName>
        <shortName evidence="1">Glu-ADT subunit A</shortName>
        <ecNumber evidence="1">6.3.5.7</ecNumber>
    </recommendedName>
</protein>
<accession>Q5HU43</accession>
<comment type="function">
    <text evidence="1">Allows the formation of correctly charged Gln-tRNA(Gln) through the transamidation of misacylated Glu-tRNA(Gln) in organisms which lack glutaminyl-tRNA synthetase. The reaction takes place in the presence of glutamine and ATP through an activated gamma-phospho-Glu-tRNA(Gln).</text>
</comment>
<comment type="catalytic activity">
    <reaction evidence="1">
        <text>L-glutamyl-tRNA(Gln) + L-glutamine + ATP + H2O = L-glutaminyl-tRNA(Gln) + L-glutamate + ADP + phosphate + H(+)</text>
        <dbReference type="Rhea" id="RHEA:17521"/>
        <dbReference type="Rhea" id="RHEA-COMP:9681"/>
        <dbReference type="Rhea" id="RHEA-COMP:9684"/>
        <dbReference type="ChEBI" id="CHEBI:15377"/>
        <dbReference type="ChEBI" id="CHEBI:15378"/>
        <dbReference type="ChEBI" id="CHEBI:29985"/>
        <dbReference type="ChEBI" id="CHEBI:30616"/>
        <dbReference type="ChEBI" id="CHEBI:43474"/>
        <dbReference type="ChEBI" id="CHEBI:58359"/>
        <dbReference type="ChEBI" id="CHEBI:78520"/>
        <dbReference type="ChEBI" id="CHEBI:78521"/>
        <dbReference type="ChEBI" id="CHEBI:456216"/>
        <dbReference type="EC" id="6.3.5.7"/>
    </reaction>
</comment>
<comment type="subunit">
    <text evidence="1">Heterotrimer of A, B and C subunits.</text>
</comment>
<comment type="similarity">
    <text evidence="1">Belongs to the amidase family. GatA subfamily.</text>
</comment>